<feature type="chain" id="PRO_0000424291" description="Polyketide synthase BAS">
    <location>
        <begin position="1"/>
        <end position="384"/>
    </location>
</feature>
<feature type="active site" description="Nucleophile and monoketide coumarate intermediate" evidence="3">
    <location>
        <position position="157"/>
    </location>
</feature>
<feature type="modified residue" description="S-(4-hydroxycinnamyl)cysteine" evidence="3">
    <location>
        <position position="157"/>
    </location>
</feature>
<feature type="mutagenesis site" description="Normal benzalacetone synthase activity." evidence="2">
    <original>C</original>
    <variation>G</variation>
    <variation>T</variation>
    <location>
        <position position="190"/>
    </location>
</feature>
<feature type="mutagenesis site" description="Acquires an additional chalcone synthase activity." evidence="3">
    <original>IL</original>
    <variation>LF</variation>
    <location>
        <begin position="207"/>
        <end position="208"/>
    </location>
</feature>
<feature type="mutagenesis site" description="Reduced benzalacetone synthase activity." evidence="2">
    <original>G</original>
    <variation>L</variation>
    <location>
        <position position="249"/>
    </location>
</feature>
<feature type="mutagenesis site" description="Enhanced benzalacetone synthase activity." evidence="2">
    <original>S</original>
    <variation>V</variation>
    <location>
        <position position="331"/>
    </location>
</feature>
<feature type="strand" evidence="5">
    <location>
        <begin position="10"/>
        <end position="18"/>
    </location>
</feature>
<feature type="strand" evidence="5">
    <location>
        <begin position="23"/>
        <end position="25"/>
    </location>
</feature>
<feature type="turn" evidence="5">
    <location>
        <begin position="26"/>
        <end position="28"/>
    </location>
</feature>
<feature type="helix" evidence="5">
    <location>
        <begin position="29"/>
        <end position="36"/>
    </location>
</feature>
<feature type="helix" evidence="5">
    <location>
        <begin position="43"/>
        <end position="54"/>
    </location>
</feature>
<feature type="turn" evidence="5">
    <location>
        <begin position="55"/>
        <end position="57"/>
    </location>
</feature>
<feature type="strand" evidence="5">
    <location>
        <begin position="60"/>
        <end position="62"/>
    </location>
</feature>
<feature type="helix" evidence="5">
    <location>
        <begin position="67"/>
        <end position="72"/>
    </location>
</feature>
<feature type="helix" evidence="5">
    <location>
        <begin position="74"/>
        <end position="77"/>
    </location>
</feature>
<feature type="strand" evidence="5">
    <location>
        <begin position="78"/>
        <end position="82"/>
    </location>
</feature>
<feature type="helix" evidence="5">
    <location>
        <begin position="84"/>
        <end position="110"/>
    </location>
</feature>
<feature type="helix" evidence="5">
    <location>
        <begin position="114"/>
        <end position="116"/>
    </location>
</feature>
<feature type="strand" evidence="5">
    <location>
        <begin position="119"/>
        <end position="126"/>
    </location>
</feature>
<feature type="strand" evidence="5">
    <location>
        <begin position="129"/>
        <end position="131"/>
    </location>
</feature>
<feature type="helix" evidence="5">
    <location>
        <begin position="133"/>
        <end position="140"/>
    </location>
</feature>
<feature type="strand" evidence="5">
    <location>
        <begin position="148"/>
        <end position="154"/>
    </location>
</feature>
<feature type="helix" evidence="5">
    <location>
        <begin position="159"/>
        <end position="173"/>
    </location>
</feature>
<feature type="strand" evidence="5">
    <location>
        <begin position="178"/>
        <end position="185"/>
    </location>
</feature>
<feature type="turn" evidence="5">
    <location>
        <begin position="188"/>
        <end position="190"/>
    </location>
</feature>
<feature type="helix" evidence="5">
    <location>
        <begin position="204"/>
        <end position="207"/>
    </location>
</feature>
<feature type="strand" evidence="5">
    <location>
        <begin position="211"/>
        <end position="220"/>
    </location>
</feature>
<feature type="turn" evidence="5">
    <location>
        <begin position="223"/>
        <end position="225"/>
    </location>
</feature>
<feature type="strand" evidence="5">
    <location>
        <begin position="230"/>
        <end position="239"/>
    </location>
</feature>
<feature type="strand" evidence="5">
    <location>
        <begin position="246"/>
        <end position="252"/>
    </location>
</feature>
<feature type="strand" evidence="5">
    <location>
        <begin position="255"/>
        <end position="260"/>
    </location>
</feature>
<feature type="helix" evidence="5">
    <location>
        <begin position="264"/>
        <end position="280"/>
    </location>
</feature>
<feature type="helix" evidence="5">
    <location>
        <begin position="281"/>
        <end position="283"/>
    </location>
</feature>
<feature type="helix" evidence="5">
    <location>
        <begin position="288"/>
        <end position="290"/>
    </location>
</feature>
<feature type="strand" evidence="5">
    <location>
        <begin position="291"/>
        <end position="295"/>
    </location>
</feature>
<feature type="helix" evidence="5">
    <location>
        <begin position="300"/>
        <end position="310"/>
    </location>
</feature>
<feature type="helix" evidence="5">
    <location>
        <begin position="314"/>
        <end position="317"/>
    </location>
</feature>
<feature type="helix" evidence="5">
    <location>
        <begin position="318"/>
        <end position="327"/>
    </location>
</feature>
<feature type="helix" evidence="5">
    <location>
        <begin position="331"/>
        <end position="333"/>
    </location>
</feature>
<feature type="helix" evidence="5">
    <location>
        <begin position="334"/>
        <end position="348"/>
    </location>
</feature>
<feature type="turn" evidence="5">
    <location>
        <begin position="354"/>
        <end position="357"/>
    </location>
</feature>
<feature type="strand" evidence="5">
    <location>
        <begin position="359"/>
        <end position="367"/>
    </location>
</feature>
<feature type="turn" evidence="5">
    <location>
        <begin position="368"/>
        <end position="370"/>
    </location>
</feature>
<feature type="strand" evidence="5">
    <location>
        <begin position="371"/>
        <end position="379"/>
    </location>
</feature>
<gene>
    <name type="primary">BAS</name>
</gene>
<evidence type="ECO:0000269" key="1">
    <source>
    </source>
</evidence>
<evidence type="ECO:0000269" key="2">
    <source>
    </source>
</evidence>
<evidence type="ECO:0000269" key="3">
    <source>
    </source>
</evidence>
<evidence type="ECO:0000305" key="4"/>
<evidence type="ECO:0007829" key="5">
    <source>
        <dbReference type="PDB" id="3A5R"/>
    </source>
</evidence>
<comment type="function">
    <text evidence="1 2">Polyketide synthase producing 4-hydroxybenzalacetone. Can use p-coumaryl-CoA as substrate but does not accept hexanoyl-CoA, isobutyryl-CoA, isovaleryl-CoA, and acetyl-CoA as a substrates. Catalyzes the initial key reaction step in the biosynthesis of phenylbutanoids.</text>
</comment>
<comment type="catalytic activity">
    <reaction evidence="1 2">
        <text>4-coumaroyl-CoA + malonyl-CoA + H2O + H(+) = 4-hydroxybenzalacetone + 2 CO2 + 2 CoA</text>
        <dbReference type="Rhea" id="RHEA:34483"/>
        <dbReference type="ChEBI" id="CHEBI:15377"/>
        <dbReference type="ChEBI" id="CHEBI:15378"/>
        <dbReference type="ChEBI" id="CHEBI:16526"/>
        <dbReference type="ChEBI" id="CHEBI:57287"/>
        <dbReference type="ChEBI" id="CHEBI:57355"/>
        <dbReference type="ChEBI" id="CHEBI:57384"/>
        <dbReference type="ChEBI" id="CHEBI:68636"/>
        <dbReference type="EC" id="2.3.1.212"/>
    </reaction>
</comment>
<comment type="biophysicochemical properties">
    <kinetics>
        <KM evidence="1 2">10 uM for 4-coumaroyl-CoA (at pH 8 and 30 degrees Celsius)</KM>
        <text>kcat is 1.79 min(-1) with 4-coumaroyl-CoA as substrate (at pH 8 and 30 degrees Celsius).</text>
    </kinetics>
    <phDependence>
        <text evidence="1 2">Optimum pH is 8.0-8.8.</text>
    </phDependence>
</comment>
<comment type="pathway">
    <text>Secondary metabolite biosynthesis; flavonoid biosynthesis.</text>
</comment>
<comment type="subunit">
    <text>Homodimer.</text>
</comment>
<comment type="similarity">
    <text evidence="4">Belongs to the thiolase-like superfamily. Chalcone/stilbene synthases family.</text>
</comment>
<keyword id="KW-0002">3D-structure</keyword>
<keyword id="KW-0012">Acyltransferase</keyword>
<keyword id="KW-0157">Chromophore</keyword>
<keyword id="KW-0379">Hydroxylation</keyword>
<keyword id="KW-0808">Transferase</keyword>
<accession>Q94FV7</accession>
<reference key="1">
    <citation type="journal article" date="2001" name="Eur. J. Biochem.">
        <title>Benzalacetone synthase. A novel polyketide synthase that plays a crucial role in the biosynthesis of phenylbutanones in Rheum palmatum.</title>
        <authorList>
            <person name="Abe I."/>
            <person name="Takahashi Y."/>
            <person name="Morita H."/>
            <person name="Noguchi H."/>
        </authorList>
    </citation>
    <scope>NUCLEOTIDE SEQUENCE [MRNA]</scope>
    <scope>FUNCTION</scope>
    <scope>HOMODIMER</scope>
    <scope>BIOPHYSICOCHEMICAL PROPERTIES</scope>
    <scope>CATALYTIC ACTIVITY</scope>
    <source>
        <tissue>Leaf</tissue>
    </source>
</reference>
<reference key="2">
    <citation type="journal article" date="2007" name="Bioorg. Med. Chem. Lett.">
        <title>Structure function analysis of benzalacetone synthase from Rheum palmatum.</title>
        <authorList>
            <person name="Abe T."/>
            <person name="Morita H."/>
            <person name="Noma H."/>
            <person name="Kohno T."/>
            <person name="Noguchi H."/>
            <person name="Abe I."/>
        </authorList>
    </citation>
    <scope>FUNCTION</scope>
    <scope>MUTAGENESIS OF CYS-190; GLY-249 AND SER-331</scope>
    <scope>CATALYTIC ACTIVITY</scope>
    <scope>BIOPHYSICOCHEMICAL PROPERTIES</scope>
</reference>
<reference key="3">
    <citation type="journal article" date="2010" name="Proc. Natl. Acad. Sci. U.S.A.">
        <title>A structure-based mechanism for benzalacetone synthase from Rheum palmatum.</title>
        <authorList>
            <person name="Morita H."/>
            <person name="Shimokawa Y."/>
            <person name="Tanio M."/>
            <person name="Kato R."/>
            <person name="Noguchi H."/>
            <person name="Sugio S."/>
            <person name="Kohno T."/>
            <person name="Abe I."/>
        </authorList>
    </citation>
    <scope>X-RAY CRYSTALLOGRAPHY (1.60 ANGSTROMS)</scope>
    <scope>POST-TRANSLATIONAL MODIFICATION AT CYS-157</scope>
    <scope>HOMODIMER</scope>
    <scope>MUTAGENESIS OF 207-ILE-LEU-208</scope>
    <scope>ACTIVE SITE</scope>
</reference>
<protein>
    <recommendedName>
        <fullName>Polyketide synthase BAS</fullName>
        <ecNumber>2.3.1.212</ecNumber>
    </recommendedName>
    <alternativeName>
        <fullName>Benzalacetone synthase</fullName>
        <shortName>RpBAS</shortName>
    </alternativeName>
</protein>
<dbReference type="EC" id="2.3.1.212"/>
<dbReference type="EMBL" id="AF326911">
    <property type="protein sequence ID" value="AAK82824.1"/>
    <property type="molecule type" value="mRNA"/>
</dbReference>
<dbReference type="PDB" id="3A5Q">
    <property type="method" value="X-ray"/>
    <property type="resolution" value="1.80 A"/>
    <property type="chains" value="A/B=1-384"/>
</dbReference>
<dbReference type="PDB" id="3A5R">
    <property type="method" value="X-ray"/>
    <property type="resolution" value="1.60 A"/>
    <property type="chains" value="A/B=1-384"/>
</dbReference>
<dbReference type="PDB" id="3A5S">
    <property type="method" value="X-ray"/>
    <property type="resolution" value="1.80 A"/>
    <property type="chains" value="A/B=1-384"/>
</dbReference>
<dbReference type="PDBsum" id="3A5Q"/>
<dbReference type="PDBsum" id="3A5R"/>
<dbReference type="PDBsum" id="3A5S"/>
<dbReference type="SMR" id="Q94FV7"/>
<dbReference type="DIP" id="DIP-58521N"/>
<dbReference type="ChEMBL" id="CHEMBL1075247"/>
<dbReference type="KEGG" id="ag:AAK82824"/>
<dbReference type="BRENDA" id="2.3.1.212">
    <property type="organism ID" value="13067"/>
</dbReference>
<dbReference type="UniPathway" id="UPA00154"/>
<dbReference type="EvolutionaryTrace" id="Q94FV7"/>
<dbReference type="GO" id="GO:0016747">
    <property type="term" value="F:acyltransferase activity, transferring groups other than amino-acyl groups"/>
    <property type="evidence" value="ECO:0007669"/>
    <property type="project" value="InterPro"/>
</dbReference>
<dbReference type="GO" id="GO:0042803">
    <property type="term" value="F:protein homodimerization activity"/>
    <property type="evidence" value="ECO:0000314"/>
    <property type="project" value="UniProtKB"/>
</dbReference>
<dbReference type="GO" id="GO:0009813">
    <property type="term" value="P:flavonoid biosynthetic process"/>
    <property type="evidence" value="ECO:0007669"/>
    <property type="project" value="UniProtKB-UniPathway"/>
</dbReference>
<dbReference type="GO" id="GO:0030639">
    <property type="term" value="P:polyketide biosynthetic process"/>
    <property type="evidence" value="ECO:0007669"/>
    <property type="project" value="TreeGrafter"/>
</dbReference>
<dbReference type="CDD" id="cd00831">
    <property type="entry name" value="CHS_like"/>
    <property type="match status" value="1"/>
</dbReference>
<dbReference type="FunFam" id="3.40.47.10:FF:000014">
    <property type="entry name" value="Chalcone synthase 1"/>
    <property type="match status" value="1"/>
</dbReference>
<dbReference type="FunFam" id="3.40.47.10:FF:000025">
    <property type="entry name" value="Chalcone synthase 2"/>
    <property type="match status" value="1"/>
</dbReference>
<dbReference type="Gene3D" id="3.40.47.10">
    <property type="match status" value="2"/>
</dbReference>
<dbReference type="InterPro" id="IPR012328">
    <property type="entry name" value="Chalcone/stilbene_synt_C"/>
</dbReference>
<dbReference type="InterPro" id="IPR001099">
    <property type="entry name" value="Chalcone/stilbene_synt_N"/>
</dbReference>
<dbReference type="InterPro" id="IPR011141">
    <property type="entry name" value="Polyketide_synthase_type-III"/>
</dbReference>
<dbReference type="InterPro" id="IPR016039">
    <property type="entry name" value="Thiolase-like"/>
</dbReference>
<dbReference type="PANTHER" id="PTHR11877:SF14">
    <property type="entry name" value="CHALCONE SYNTHASE"/>
    <property type="match status" value="1"/>
</dbReference>
<dbReference type="PANTHER" id="PTHR11877">
    <property type="entry name" value="HYDROXYMETHYLGLUTARYL-COA SYNTHASE"/>
    <property type="match status" value="1"/>
</dbReference>
<dbReference type="Pfam" id="PF02797">
    <property type="entry name" value="Chal_sti_synt_C"/>
    <property type="match status" value="1"/>
</dbReference>
<dbReference type="Pfam" id="PF00195">
    <property type="entry name" value="Chal_sti_synt_N"/>
    <property type="match status" value="1"/>
</dbReference>
<dbReference type="PIRSF" id="PIRSF000451">
    <property type="entry name" value="PKS_III"/>
    <property type="match status" value="1"/>
</dbReference>
<dbReference type="SUPFAM" id="SSF53901">
    <property type="entry name" value="Thiolase-like"/>
    <property type="match status" value="2"/>
</dbReference>
<proteinExistence type="evidence at protein level"/>
<sequence>MATEEMKKLATVMAIGTANPPNCYYQADFPDFYFRVTNSDHLINLKQKFKRLCENSRIEKRYLHVTEEILKENPNIAAYEATSLNVRHKMQVKGVAELGKEAALKAIKEWGQPKSKITHLIVCCLAGVDMPGADYQLTKLLDLDPSVKRFMFYHLGCYAGGTVLRLAKDIAENNKGARVLIVCSEMTTTCFRGPSETHLDSMIGQAILGDGAAAVIVGADPDLTVERPIFELVSTAQTIVPESHGAIEGHLLESGLSFHLYKTVPTLISNNIKTCLSDAFTPLNISDWNSLFWIAHPGGPAILDQVTAKVGLEKEKLKVTRQVLKDYGNMSSATVFFIMDEMRKKSLENGQATTGEGLEWGVLFGFGPGITVETVVLRSVPVIS</sequence>
<organism>
    <name type="scientific">Rheum palmatum</name>
    <name type="common">Chinese rhubarb</name>
    <dbReference type="NCBI Taxonomy" id="137221"/>
    <lineage>
        <taxon>Eukaryota</taxon>
        <taxon>Viridiplantae</taxon>
        <taxon>Streptophyta</taxon>
        <taxon>Embryophyta</taxon>
        <taxon>Tracheophyta</taxon>
        <taxon>Spermatophyta</taxon>
        <taxon>Magnoliopsida</taxon>
        <taxon>eudicotyledons</taxon>
        <taxon>Gunneridae</taxon>
        <taxon>Pentapetalae</taxon>
        <taxon>Caryophyllales</taxon>
        <taxon>Polygonaceae</taxon>
        <taxon>Polygonoideae</taxon>
        <taxon>Rumiceae</taxon>
        <taxon>Rheum</taxon>
    </lineage>
</organism>
<name>BAS_RHEPA</name>